<comment type="function">
    <text evidence="1">Prevents the cell division inhibition by proteins MinC and MinD at internal division sites while permitting inhibition at polar sites. This ensures cell division at the proper site by restricting the formation of a division septum at the midpoint of the long axis of the cell.</text>
</comment>
<comment type="similarity">
    <text evidence="1">Belongs to the MinE family.</text>
</comment>
<gene>
    <name evidence="1" type="primary">minE</name>
    <name type="ordered locus">Tery_3384</name>
</gene>
<evidence type="ECO:0000255" key="1">
    <source>
        <dbReference type="HAMAP-Rule" id="MF_00262"/>
    </source>
</evidence>
<protein>
    <recommendedName>
        <fullName evidence="1">Cell division topological specificity factor</fullName>
    </recommendedName>
</protein>
<sequence>MLNEIIEKLFYRNNPKSREEVKRRLKLVIAHDRADLNPEIIQAMRKDIIDVVSRYVEIDDTDSEFLLENNQRATSLVANLPIRRIKAKPTQDQED</sequence>
<reference key="1">
    <citation type="journal article" date="2015" name="Proc. Natl. Acad. Sci. U.S.A.">
        <title>Trichodesmium genome maintains abundant, widespread noncoding DNA in situ, despite oligotrophic lifestyle.</title>
        <authorList>
            <person name="Walworth N."/>
            <person name="Pfreundt U."/>
            <person name="Nelson W.C."/>
            <person name="Mincer T."/>
            <person name="Heidelberg J.F."/>
            <person name="Fu F."/>
            <person name="Waterbury J.B."/>
            <person name="Glavina del Rio T."/>
            <person name="Goodwin L."/>
            <person name="Kyrpides N.C."/>
            <person name="Land M.L."/>
            <person name="Woyke T."/>
            <person name="Hutchins D.A."/>
            <person name="Hess W.R."/>
            <person name="Webb E.A."/>
        </authorList>
    </citation>
    <scope>NUCLEOTIDE SEQUENCE [LARGE SCALE GENOMIC DNA]</scope>
    <source>
        <strain>IMS101</strain>
    </source>
</reference>
<name>MINE_TRIEI</name>
<proteinExistence type="inferred from homology"/>
<keyword id="KW-0131">Cell cycle</keyword>
<keyword id="KW-0132">Cell division</keyword>
<dbReference type="EMBL" id="CP000393">
    <property type="protein sequence ID" value="ABG52485.1"/>
    <property type="molecule type" value="Genomic_DNA"/>
</dbReference>
<dbReference type="RefSeq" id="WP_011612830.1">
    <property type="nucleotide sequence ID" value="NC_008312.1"/>
</dbReference>
<dbReference type="SMR" id="Q10Z39"/>
<dbReference type="STRING" id="203124.Tery_3384"/>
<dbReference type="KEGG" id="ter:Tery_3384"/>
<dbReference type="eggNOG" id="COG0851">
    <property type="taxonomic scope" value="Bacteria"/>
</dbReference>
<dbReference type="HOGENOM" id="CLU_137929_1_1_3"/>
<dbReference type="OrthoDB" id="9796578at2"/>
<dbReference type="GO" id="GO:0051301">
    <property type="term" value="P:cell division"/>
    <property type="evidence" value="ECO:0007669"/>
    <property type="project" value="UniProtKB-KW"/>
</dbReference>
<dbReference type="GO" id="GO:0032955">
    <property type="term" value="P:regulation of division septum assembly"/>
    <property type="evidence" value="ECO:0007669"/>
    <property type="project" value="InterPro"/>
</dbReference>
<dbReference type="Gene3D" id="3.30.1070.10">
    <property type="entry name" value="Cell division topological specificity factor MinE"/>
    <property type="match status" value="1"/>
</dbReference>
<dbReference type="HAMAP" id="MF_00262">
    <property type="entry name" value="MinE"/>
    <property type="match status" value="1"/>
</dbReference>
<dbReference type="InterPro" id="IPR005527">
    <property type="entry name" value="MinE"/>
</dbReference>
<dbReference type="InterPro" id="IPR036707">
    <property type="entry name" value="MinE_sf"/>
</dbReference>
<dbReference type="NCBIfam" id="TIGR01215">
    <property type="entry name" value="minE"/>
    <property type="match status" value="1"/>
</dbReference>
<dbReference type="Pfam" id="PF03776">
    <property type="entry name" value="MinE"/>
    <property type="match status" value="1"/>
</dbReference>
<dbReference type="SUPFAM" id="SSF55229">
    <property type="entry name" value="Cell division protein MinE topological specificity domain"/>
    <property type="match status" value="1"/>
</dbReference>
<organism>
    <name type="scientific">Trichodesmium erythraeum (strain IMS101)</name>
    <dbReference type="NCBI Taxonomy" id="203124"/>
    <lineage>
        <taxon>Bacteria</taxon>
        <taxon>Bacillati</taxon>
        <taxon>Cyanobacteriota</taxon>
        <taxon>Cyanophyceae</taxon>
        <taxon>Oscillatoriophycideae</taxon>
        <taxon>Oscillatoriales</taxon>
        <taxon>Microcoleaceae</taxon>
        <taxon>Trichodesmium</taxon>
    </lineage>
</organism>
<feature type="chain" id="PRO_0000298212" description="Cell division topological specificity factor">
    <location>
        <begin position="1"/>
        <end position="95"/>
    </location>
</feature>
<accession>Q10Z39</accession>